<reference key="1">
    <citation type="journal article" date="2002" name="Lancet">
        <title>Genome and virulence determinants of high virulence community-acquired MRSA.</title>
        <authorList>
            <person name="Baba T."/>
            <person name="Takeuchi F."/>
            <person name="Kuroda M."/>
            <person name="Yuzawa H."/>
            <person name="Aoki K."/>
            <person name="Oguchi A."/>
            <person name="Nagai Y."/>
            <person name="Iwama N."/>
            <person name="Asano K."/>
            <person name="Naimi T."/>
            <person name="Kuroda H."/>
            <person name="Cui L."/>
            <person name="Yamamoto K."/>
            <person name="Hiramatsu K."/>
        </authorList>
    </citation>
    <scope>NUCLEOTIDE SEQUENCE [LARGE SCALE GENOMIC DNA]</scope>
    <source>
        <strain>MW2</strain>
    </source>
</reference>
<name>SYN_STAAW</name>
<gene>
    <name evidence="1" type="primary">asnS</name>
    <name type="ordered locus">MW1344</name>
</gene>
<evidence type="ECO:0000255" key="1">
    <source>
        <dbReference type="HAMAP-Rule" id="MF_00534"/>
    </source>
</evidence>
<keyword id="KW-0030">Aminoacyl-tRNA synthetase</keyword>
<keyword id="KW-0067">ATP-binding</keyword>
<keyword id="KW-0963">Cytoplasm</keyword>
<keyword id="KW-0436">Ligase</keyword>
<keyword id="KW-0547">Nucleotide-binding</keyword>
<keyword id="KW-0648">Protein biosynthesis</keyword>
<organism>
    <name type="scientific">Staphylococcus aureus (strain MW2)</name>
    <dbReference type="NCBI Taxonomy" id="196620"/>
    <lineage>
        <taxon>Bacteria</taxon>
        <taxon>Bacillati</taxon>
        <taxon>Bacillota</taxon>
        <taxon>Bacilli</taxon>
        <taxon>Bacillales</taxon>
        <taxon>Staphylococcaceae</taxon>
        <taxon>Staphylococcus</taxon>
    </lineage>
</organism>
<feature type="chain" id="PRO_0000176452" description="Asparagine--tRNA ligase">
    <location>
        <begin position="1"/>
        <end position="430"/>
    </location>
</feature>
<sequence length="430" mass="49174">MKTTIKQAKDHLNQDVTIGAWLTNKRSSGKIAFLQLRDGTGFMQGVVVKSEVDEEVFKLAKEITQESSLYVTGTITEDNRSDLGYEMQVKSIEVISEAHDYPITPKNHGTEFLMDHRHLWLRSKKQHAVMKIRNEVIRATYEFFNKDGFTKVDPPILTASAPEGTSELFHTKYFDQDAFLSQSGQLYLEAAAMAHGKVFSFGPTFRAEKSKTRRHLIEFWMIEGEMAFTNHAESLEIQEQYVTHVVKSVLENCKLELKILERDTSKLEKVATPFPRISYDDAIEFLKSEGFDDIEWGEDFGAPHETAIANHYDLPVFITNYPTKIKPFYMQPNPENEETVLCADLIAPEGYGEIIGGSERVDDLELLEQRVKEHGLDEEAYSYYLDLRRYGSVPHCGFGLGLERTVAWISGVEHVRETAPFPRLLNRLYP</sequence>
<accession>Q8NWP3</accession>
<protein>
    <recommendedName>
        <fullName evidence="1">Asparagine--tRNA ligase</fullName>
        <ecNumber evidence="1">6.1.1.22</ecNumber>
    </recommendedName>
    <alternativeName>
        <fullName evidence="1">Asparaginyl-tRNA synthetase</fullName>
        <shortName evidence="1">AsnRS</shortName>
    </alternativeName>
</protein>
<proteinExistence type="inferred from homology"/>
<dbReference type="EC" id="6.1.1.22" evidence="1"/>
<dbReference type="EMBL" id="BA000033">
    <property type="protein sequence ID" value="BAB95209.1"/>
    <property type="molecule type" value="Genomic_DNA"/>
</dbReference>
<dbReference type="RefSeq" id="WP_000858792.1">
    <property type="nucleotide sequence ID" value="NC_003923.1"/>
</dbReference>
<dbReference type="SMR" id="Q8NWP3"/>
<dbReference type="KEGG" id="sam:MW1344"/>
<dbReference type="HOGENOM" id="CLU_004553_2_0_9"/>
<dbReference type="GO" id="GO:0005737">
    <property type="term" value="C:cytoplasm"/>
    <property type="evidence" value="ECO:0007669"/>
    <property type="project" value="UniProtKB-SubCell"/>
</dbReference>
<dbReference type="GO" id="GO:0004816">
    <property type="term" value="F:asparagine-tRNA ligase activity"/>
    <property type="evidence" value="ECO:0007669"/>
    <property type="project" value="UniProtKB-UniRule"/>
</dbReference>
<dbReference type="GO" id="GO:0005524">
    <property type="term" value="F:ATP binding"/>
    <property type="evidence" value="ECO:0007669"/>
    <property type="project" value="UniProtKB-UniRule"/>
</dbReference>
<dbReference type="GO" id="GO:0140096">
    <property type="term" value="F:catalytic activity, acting on a protein"/>
    <property type="evidence" value="ECO:0007669"/>
    <property type="project" value="UniProtKB-ARBA"/>
</dbReference>
<dbReference type="GO" id="GO:0003676">
    <property type="term" value="F:nucleic acid binding"/>
    <property type="evidence" value="ECO:0007669"/>
    <property type="project" value="InterPro"/>
</dbReference>
<dbReference type="GO" id="GO:0016740">
    <property type="term" value="F:transferase activity"/>
    <property type="evidence" value="ECO:0007669"/>
    <property type="project" value="UniProtKB-ARBA"/>
</dbReference>
<dbReference type="GO" id="GO:0006421">
    <property type="term" value="P:asparaginyl-tRNA aminoacylation"/>
    <property type="evidence" value="ECO:0007669"/>
    <property type="project" value="UniProtKB-UniRule"/>
</dbReference>
<dbReference type="CDD" id="cd04323">
    <property type="entry name" value="AsnRS_cyto_like_N"/>
    <property type="match status" value="1"/>
</dbReference>
<dbReference type="CDD" id="cd00776">
    <property type="entry name" value="AsxRS_core"/>
    <property type="match status" value="1"/>
</dbReference>
<dbReference type="Gene3D" id="3.30.930.10">
    <property type="entry name" value="Bira Bifunctional Protein, Domain 2"/>
    <property type="match status" value="1"/>
</dbReference>
<dbReference type="Gene3D" id="2.40.50.140">
    <property type="entry name" value="Nucleic acid-binding proteins"/>
    <property type="match status" value="1"/>
</dbReference>
<dbReference type="HAMAP" id="MF_00534">
    <property type="entry name" value="Asn_tRNA_synth"/>
    <property type="match status" value="1"/>
</dbReference>
<dbReference type="InterPro" id="IPR004364">
    <property type="entry name" value="Aa-tRNA-synt_II"/>
</dbReference>
<dbReference type="InterPro" id="IPR006195">
    <property type="entry name" value="aa-tRNA-synth_II"/>
</dbReference>
<dbReference type="InterPro" id="IPR045864">
    <property type="entry name" value="aa-tRNA-synth_II/BPL/LPL"/>
</dbReference>
<dbReference type="InterPro" id="IPR004522">
    <property type="entry name" value="Asn-tRNA-ligase"/>
</dbReference>
<dbReference type="InterPro" id="IPR002312">
    <property type="entry name" value="Asp/Asn-tRNA-synth_IIb"/>
</dbReference>
<dbReference type="InterPro" id="IPR012340">
    <property type="entry name" value="NA-bd_OB-fold"/>
</dbReference>
<dbReference type="InterPro" id="IPR004365">
    <property type="entry name" value="NA-bd_OB_tRNA"/>
</dbReference>
<dbReference type="NCBIfam" id="TIGR00457">
    <property type="entry name" value="asnS"/>
    <property type="match status" value="1"/>
</dbReference>
<dbReference type="NCBIfam" id="NF003037">
    <property type="entry name" value="PRK03932.1"/>
    <property type="match status" value="1"/>
</dbReference>
<dbReference type="NCBIfam" id="NF003483">
    <property type="entry name" value="PRK05159.1"/>
    <property type="match status" value="1"/>
</dbReference>
<dbReference type="PANTHER" id="PTHR22594:SF34">
    <property type="entry name" value="ASPARAGINE--TRNA LIGASE, MITOCHONDRIAL-RELATED"/>
    <property type="match status" value="1"/>
</dbReference>
<dbReference type="PANTHER" id="PTHR22594">
    <property type="entry name" value="ASPARTYL/LYSYL-TRNA SYNTHETASE"/>
    <property type="match status" value="1"/>
</dbReference>
<dbReference type="Pfam" id="PF00152">
    <property type="entry name" value="tRNA-synt_2"/>
    <property type="match status" value="1"/>
</dbReference>
<dbReference type="Pfam" id="PF01336">
    <property type="entry name" value="tRNA_anti-codon"/>
    <property type="match status" value="1"/>
</dbReference>
<dbReference type="PRINTS" id="PR01042">
    <property type="entry name" value="TRNASYNTHASP"/>
</dbReference>
<dbReference type="SUPFAM" id="SSF55681">
    <property type="entry name" value="Class II aaRS and biotin synthetases"/>
    <property type="match status" value="1"/>
</dbReference>
<dbReference type="SUPFAM" id="SSF50249">
    <property type="entry name" value="Nucleic acid-binding proteins"/>
    <property type="match status" value="1"/>
</dbReference>
<dbReference type="PROSITE" id="PS50862">
    <property type="entry name" value="AA_TRNA_LIGASE_II"/>
    <property type="match status" value="1"/>
</dbReference>
<comment type="catalytic activity">
    <reaction evidence="1">
        <text>tRNA(Asn) + L-asparagine + ATP = L-asparaginyl-tRNA(Asn) + AMP + diphosphate + H(+)</text>
        <dbReference type="Rhea" id="RHEA:11180"/>
        <dbReference type="Rhea" id="RHEA-COMP:9659"/>
        <dbReference type="Rhea" id="RHEA-COMP:9674"/>
        <dbReference type="ChEBI" id="CHEBI:15378"/>
        <dbReference type="ChEBI" id="CHEBI:30616"/>
        <dbReference type="ChEBI" id="CHEBI:33019"/>
        <dbReference type="ChEBI" id="CHEBI:58048"/>
        <dbReference type="ChEBI" id="CHEBI:78442"/>
        <dbReference type="ChEBI" id="CHEBI:78515"/>
        <dbReference type="ChEBI" id="CHEBI:456215"/>
        <dbReference type="EC" id="6.1.1.22"/>
    </reaction>
</comment>
<comment type="subunit">
    <text evidence="1">Homodimer.</text>
</comment>
<comment type="subcellular location">
    <subcellularLocation>
        <location evidence="1">Cytoplasm</location>
    </subcellularLocation>
</comment>
<comment type="similarity">
    <text evidence="1">Belongs to the class-II aminoacyl-tRNA synthetase family.</text>
</comment>